<feature type="chain" id="PRO_1000021782" description="Adenylate kinase">
    <location>
        <begin position="1"/>
        <end position="214"/>
    </location>
</feature>
<feature type="region of interest" description="NMP" evidence="1">
    <location>
        <begin position="30"/>
        <end position="59"/>
    </location>
</feature>
<feature type="region of interest" description="LID" evidence="1">
    <location>
        <begin position="122"/>
        <end position="159"/>
    </location>
</feature>
<feature type="binding site" evidence="1">
    <location>
        <begin position="10"/>
        <end position="15"/>
    </location>
    <ligand>
        <name>ATP</name>
        <dbReference type="ChEBI" id="CHEBI:30616"/>
    </ligand>
</feature>
<feature type="binding site" evidence="1">
    <location>
        <position position="31"/>
    </location>
    <ligand>
        <name>AMP</name>
        <dbReference type="ChEBI" id="CHEBI:456215"/>
    </ligand>
</feature>
<feature type="binding site" evidence="1">
    <location>
        <position position="36"/>
    </location>
    <ligand>
        <name>AMP</name>
        <dbReference type="ChEBI" id="CHEBI:456215"/>
    </ligand>
</feature>
<feature type="binding site" evidence="1">
    <location>
        <begin position="57"/>
        <end position="59"/>
    </location>
    <ligand>
        <name>AMP</name>
        <dbReference type="ChEBI" id="CHEBI:456215"/>
    </ligand>
</feature>
<feature type="binding site" evidence="1">
    <location>
        <begin position="85"/>
        <end position="88"/>
    </location>
    <ligand>
        <name>AMP</name>
        <dbReference type="ChEBI" id="CHEBI:456215"/>
    </ligand>
</feature>
<feature type="binding site" evidence="1">
    <location>
        <position position="92"/>
    </location>
    <ligand>
        <name>AMP</name>
        <dbReference type="ChEBI" id="CHEBI:456215"/>
    </ligand>
</feature>
<feature type="binding site" evidence="1">
    <location>
        <position position="123"/>
    </location>
    <ligand>
        <name>ATP</name>
        <dbReference type="ChEBI" id="CHEBI:30616"/>
    </ligand>
</feature>
<feature type="binding site" evidence="1">
    <location>
        <begin position="132"/>
        <end position="133"/>
    </location>
    <ligand>
        <name>ATP</name>
        <dbReference type="ChEBI" id="CHEBI:30616"/>
    </ligand>
</feature>
<feature type="binding site" evidence="1">
    <location>
        <position position="156"/>
    </location>
    <ligand>
        <name>AMP</name>
        <dbReference type="ChEBI" id="CHEBI:456215"/>
    </ligand>
</feature>
<feature type="binding site" evidence="1">
    <location>
        <position position="167"/>
    </location>
    <ligand>
        <name>AMP</name>
        <dbReference type="ChEBI" id="CHEBI:456215"/>
    </ligand>
</feature>
<feature type="binding site" evidence="1">
    <location>
        <position position="200"/>
    </location>
    <ligand>
        <name>ATP</name>
        <dbReference type="ChEBI" id="CHEBI:30616"/>
    </ligand>
</feature>
<evidence type="ECO:0000255" key="1">
    <source>
        <dbReference type="HAMAP-Rule" id="MF_00235"/>
    </source>
</evidence>
<keyword id="KW-0067">ATP-binding</keyword>
<keyword id="KW-0963">Cytoplasm</keyword>
<keyword id="KW-0418">Kinase</keyword>
<keyword id="KW-0545">Nucleotide biosynthesis</keyword>
<keyword id="KW-0547">Nucleotide-binding</keyword>
<keyword id="KW-1185">Reference proteome</keyword>
<keyword id="KW-0808">Transferase</keyword>
<sequence>MRIILLGAPGAGKGTQAQFIMDKYGIPQISTGDMLRAAIKAGTELGKQAKSVIDAGQLVSDEIILGLVKERIAQEDCAKGFLLDGFPRTIPQADGLKENGVSIDYVLEFDVADEVIVERMSGRRAHLPSGRTYHVVYNPPKEEGKDDETGEPLVIREDDKPETVLARLGIYHEQTAPLIAYYNKEAEAGNTKYLKFDGTKLVAEVSAEIEKALA</sequence>
<organism>
    <name type="scientific">Aliivibrio fischeri (strain ATCC 700601 / ES114)</name>
    <name type="common">Vibrio fischeri</name>
    <dbReference type="NCBI Taxonomy" id="312309"/>
    <lineage>
        <taxon>Bacteria</taxon>
        <taxon>Pseudomonadati</taxon>
        <taxon>Pseudomonadota</taxon>
        <taxon>Gammaproteobacteria</taxon>
        <taxon>Vibrionales</taxon>
        <taxon>Vibrionaceae</taxon>
        <taxon>Aliivibrio</taxon>
    </lineage>
</organism>
<gene>
    <name evidence="1" type="primary">adk</name>
    <name type="ordered locus">VF_0793</name>
</gene>
<proteinExistence type="inferred from homology"/>
<comment type="function">
    <text evidence="1">Catalyzes the reversible transfer of the terminal phosphate group between ATP and AMP. Plays an important role in cellular energy homeostasis and in adenine nucleotide metabolism.</text>
</comment>
<comment type="catalytic activity">
    <reaction evidence="1">
        <text>AMP + ATP = 2 ADP</text>
        <dbReference type="Rhea" id="RHEA:12973"/>
        <dbReference type="ChEBI" id="CHEBI:30616"/>
        <dbReference type="ChEBI" id="CHEBI:456215"/>
        <dbReference type="ChEBI" id="CHEBI:456216"/>
        <dbReference type="EC" id="2.7.4.3"/>
    </reaction>
</comment>
<comment type="pathway">
    <text evidence="1">Purine metabolism; AMP biosynthesis via salvage pathway; AMP from ADP: step 1/1.</text>
</comment>
<comment type="subunit">
    <text evidence="1">Monomer.</text>
</comment>
<comment type="subcellular location">
    <subcellularLocation>
        <location evidence="1">Cytoplasm</location>
    </subcellularLocation>
</comment>
<comment type="domain">
    <text evidence="1">Consists of three domains, a large central CORE domain and two small peripheral domains, NMPbind and LID, which undergo movements during catalysis. The LID domain closes over the site of phosphoryl transfer upon ATP binding. Assembling and dissambling the active center during each catalytic cycle provides an effective means to prevent ATP hydrolysis.</text>
</comment>
<comment type="similarity">
    <text evidence="1">Belongs to the adenylate kinase family.</text>
</comment>
<accession>Q5E6Q8</accession>
<name>KAD_ALIF1</name>
<reference key="1">
    <citation type="journal article" date="2005" name="Proc. Natl. Acad. Sci. U.S.A.">
        <title>Complete genome sequence of Vibrio fischeri: a symbiotic bacterium with pathogenic congeners.</title>
        <authorList>
            <person name="Ruby E.G."/>
            <person name="Urbanowski M."/>
            <person name="Campbell J."/>
            <person name="Dunn A."/>
            <person name="Faini M."/>
            <person name="Gunsalus R."/>
            <person name="Lostroh P."/>
            <person name="Lupp C."/>
            <person name="McCann J."/>
            <person name="Millikan D."/>
            <person name="Schaefer A."/>
            <person name="Stabb E."/>
            <person name="Stevens A."/>
            <person name="Visick K."/>
            <person name="Whistler C."/>
            <person name="Greenberg E.P."/>
        </authorList>
    </citation>
    <scope>NUCLEOTIDE SEQUENCE [LARGE SCALE GENOMIC DNA]</scope>
    <source>
        <strain>ATCC 700601 / ES114</strain>
    </source>
</reference>
<protein>
    <recommendedName>
        <fullName evidence="1">Adenylate kinase</fullName>
        <shortName evidence="1">AK</shortName>
        <ecNumber evidence="1">2.7.4.3</ecNumber>
    </recommendedName>
    <alternativeName>
        <fullName evidence="1">ATP-AMP transphosphorylase</fullName>
    </alternativeName>
    <alternativeName>
        <fullName evidence="1">ATP:AMP phosphotransferase</fullName>
    </alternativeName>
    <alternativeName>
        <fullName evidence="1">Adenylate monophosphate kinase</fullName>
    </alternativeName>
</protein>
<dbReference type="EC" id="2.7.4.3" evidence="1"/>
<dbReference type="EMBL" id="CP000020">
    <property type="protein sequence ID" value="AAW85288.1"/>
    <property type="molecule type" value="Genomic_DNA"/>
</dbReference>
<dbReference type="RefSeq" id="WP_005418249.1">
    <property type="nucleotide sequence ID" value="NZ_CAWLES010000001.1"/>
</dbReference>
<dbReference type="RefSeq" id="YP_204176.1">
    <property type="nucleotide sequence ID" value="NC_006840.2"/>
</dbReference>
<dbReference type="SMR" id="Q5E6Q8"/>
<dbReference type="STRING" id="312309.VF_0793"/>
<dbReference type="EnsemblBacteria" id="AAW85288">
    <property type="protein sequence ID" value="AAW85288"/>
    <property type="gene ID" value="VF_0793"/>
</dbReference>
<dbReference type="GeneID" id="54163461"/>
<dbReference type="KEGG" id="vfi:VF_0793"/>
<dbReference type="PATRIC" id="fig|312309.11.peg.785"/>
<dbReference type="eggNOG" id="COG0563">
    <property type="taxonomic scope" value="Bacteria"/>
</dbReference>
<dbReference type="HOGENOM" id="CLU_032354_1_2_6"/>
<dbReference type="OrthoDB" id="9805030at2"/>
<dbReference type="UniPathway" id="UPA00588">
    <property type="reaction ID" value="UER00649"/>
</dbReference>
<dbReference type="Proteomes" id="UP000000537">
    <property type="component" value="Chromosome I"/>
</dbReference>
<dbReference type="GO" id="GO:0005737">
    <property type="term" value="C:cytoplasm"/>
    <property type="evidence" value="ECO:0007669"/>
    <property type="project" value="UniProtKB-SubCell"/>
</dbReference>
<dbReference type="GO" id="GO:0004017">
    <property type="term" value="F:adenylate kinase activity"/>
    <property type="evidence" value="ECO:0007669"/>
    <property type="project" value="UniProtKB-UniRule"/>
</dbReference>
<dbReference type="GO" id="GO:0005524">
    <property type="term" value="F:ATP binding"/>
    <property type="evidence" value="ECO:0007669"/>
    <property type="project" value="UniProtKB-UniRule"/>
</dbReference>
<dbReference type="GO" id="GO:0044209">
    <property type="term" value="P:AMP salvage"/>
    <property type="evidence" value="ECO:0007669"/>
    <property type="project" value="UniProtKB-UniRule"/>
</dbReference>
<dbReference type="CDD" id="cd01428">
    <property type="entry name" value="ADK"/>
    <property type="match status" value="1"/>
</dbReference>
<dbReference type="FunFam" id="3.40.50.300:FF:000106">
    <property type="entry name" value="Adenylate kinase mitochondrial"/>
    <property type="match status" value="1"/>
</dbReference>
<dbReference type="Gene3D" id="3.40.50.300">
    <property type="entry name" value="P-loop containing nucleotide triphosphate hydrolases"/>
    <property type="match status" value="1"/>
</dbReference>
<dbReference type="HAMAP" id="MF_00235">
    <property type="entry name" value="Adenylate_kinase_Adk"/>
    <property type="match status" value="1"/>
</dbReference>
<dbReference type="InterPro" id="IPR006259">
    <property type="entry name" value="Adenyl_kin_sub"/>
</dbReference>
<dbReference type="InterPro" id="IPR000850">
    <property type="entry name" value="Adenylat/UMP-CMP_kin"/>
</dbReference>
<dbReference type="InterPro" id="IPR033690">
    <property type="entry name" value="Adenylat_kinase_CS"/>
</dbReference>
<dbReference type="InterPro" id="IPR007862">
    <property type="entry name" value="Adenylate_kinase_lid-dom"/>
</dbReference>
<dbReference type="InterPro" id="IPR027417">
    <property type="entry name" value="P-loop_NTPase"/>
</dbReference>
<dbReference type="NCBIfam" id="TIGR01351">
    <property type="entry name" value="adk"/>
    <property type="match status" value="1"/>
</dbReference>
<dbReference type="NCBIfam" id="NF001379">
    <property type="entry name" value="PRK00279.1-1"/>
    <property type="match status" value="1"/>
</dbReference>
<dbReference type="NCBIfam" id="NF001380">
    <property type="entry name" value="PRK00279.1-2"/>
    <property type="match status" value="1"/>
</dbReference>
<dbReference type="NCBIfam" id="NF001381">
    <property type="entry name" value="PRK00279.1-3"/>
    <property type="match status" value="1"/>
</dbReference>
<dbReference type="PANTHER" id="PTHR23359">
    <property type="entry name" value="NUCLEOTIDE KINASE"/>
    <property type="match status" value="1"/>
</dbReference>
<dbReference type="Pfam" id="PF00406">
    <property type="entry name" value="ADK"/>
    <property type="match status" value="1"/>
</dbReference>
<dbReference type="Pfam" id="PF05191">
    <property type="entry name" value="ADK_lid"/>
    <property type="match status" value="1"/>
</dbReference>
<dbReference type="PRINTS" id="PR00094">
    <property type="entry name" value="ADENYLTKNASE"/>
</dbReference>
<dbReference type="SUPFAM" id="SSF52540">
    <property type="entry name" value="P-loop containing nucleoside triphosphate hydrolases"/>
    <property type="match status" value="1"/>
</dbReference>
<dbReference type="PROSITE" id="PS00113">
    <property type="entry name" value="ADENYLATE_KINASE"/>
    <property type="match status" value="1"/>
</dbReference>